<organism>
    <name type="scientific">Macaca mulatta</name>
    <name type="common">Rhesus macaque</name>
    <dbReference type="NCBI Taxonomy" id="9544"/>
    <lineage>
        <taxon>Eukaryota</taxon>
        <taxon>Metazoa</taxon>
        <taxon>Chordata</taxon>
        <taxon>Craniata</taxon>
        <taxon>Vertebrata</taxon>
        <taxon>Euteleostomi</taxon>
        <taxon>Mammalia</taxon>
        <taxon>Eutheria</taxon>
        <taxon>Euarchontoglires</taxon>
        <taxon>Primates</taxon>
        <taxon>Haplorrhini</taxon>
        <taxon>Catarrhini</taxon>
        <taxon>Cercopithecidae</taxon>
        <taxon>Cercopithecinae</taxon>
        <taxon>Macaca</taxon>
    </lineage>
</organism>
<reference key="1">
    <citation type="journal article" date="1998" name="Obes. Res.">
        <title>Monkey leptin receptor mRNA: sequence, tissue distribution, and mRNA expression in the adipose tissue of normal, hyperinsulinemic, and type 2 diabetic rhesus monkeys.</title>
        <authorList>
            <person name="Hotta K."/>
            <person name="Gustafson T.A."/>
            <person name="Ortmeyer H.K."/>
            <person name="Bodkin N.L."/>
            <person name="Hansen B.C."/>
        </authorList>
    </citation>
    <scope>NUCLEOTIDE SEQUENCE [MRNA] (ISOFORMS A AND B)</scope>
    <source>
        <tissue>Adipose tissue</tissue>
    </source>
</reference>
<reference key="2">
    <citation type="submission" date="2000-01" db="EMBL/GenBank/DDBJ databases">
        <authorList>
            <person name="Hotta K."/>
            <person name="Gustafson T.A."/>
            <person name="Ortmeyer H.K."/>
            <person name="Bodkin N.L."/>
            <person name="Hansen B.C."/>
        </authorList>
    </citation>
    <scope>NUCLEOTIDE SEQUENCE [MRNA] (ISOFORMS A AND B)</scope>
    <source>
        <tissue>Adipose tissue</tissue>
    </source>
</reference>
<reference key="3">
    <citation type="submission" date="2000-01" db="EMBL/GenBank/DDBJ databases">
        <authorList>
            <person name="Gustafson T.A."/>
            <person name="Ortmeyer H.K."/>
            <person name="Bodkin N.L."/>
            <person name="Hansen B.C."/>
        </authorList>
    </citation>
    <scope>NUCLEOTIDE SEQUENCE [MRNA]</scope>
</reference>
<evidence type="ECO:0000250" key="1"/>
<evidence type="ECO:0000250" key="2">
    <source>
        <dbReference type="UniProtKB" id="P48356"/>
    </source>
</evidence>
<evidence type="ECO:0000250" key="3">
    <source>
        <dbReference type="UniProtKB" id="P48357"/>
    </source>
</evidence>
<evidence type="ECO:0000255" key="4"/>
<evidence type="ECO:0000255" key="5">
    <source>
        <dbReference type="PROSITE-ProRule" id="PRU00316"/>
    </source>
</evidence>
<evidence type="ECO:0000303" key="6">
    <source>
    </source>
</evidence>
<evidence type="ECO:0000303" key="7">
    <source ref="2"/>
</evidence>
<evidence type="ECO:0000305" key="8"/>
<name>LEPR_MACMU</name>
<feature type="signal peptide" evidence="4">
    <location>
        <begin position="1"/>
        <end position="21"/>
    </location>
</feature>
<feature type="chain" id="PRO_0000010905" description="Leptin receptor">
    <location>
        <begin position="22"/>
        <end position="1163"/>
    </location>
</feature>
<feature type="topological domain" description="Extracellular" evidence="4">
    <location>
        <begin position="22"/>
        <end position="837"/>
    </location>
</feature>
<feature type="transmembrane region" description="Helical" evidence="4">
    <location>
        <begin position="838"/>
        <end position="860"/>
    </location>
</feature>
<feature type="topological domain" description="Cytoplasmic" evidence="4">
    <location>
        <begin position="861"/>
        <end position="1163"/>
    </location>
</feature>
<feature type="domain" description="Fibronectin type-III 1" evidence="5">
    <location>
        <begin position="237"/>
        <end position="331"/>
    </location>
</feature>
<feature type="domain" description="Fibronectin type-III 2" evidence="5">
    <location>
        <begin position="537"/>
        <end position="632"/>
    </location>
</feature>
<feature type="domain" description="Fibronectin type-III 3" evidence="5">
    <location>
        <begin position="637"/>
        <end position="730"/>
    </location>
</feature>
<feature type="domain" description="Fibronectin type-III 4" evidence="5">
    <location>
        <begin position="738"/>
        <end position="831"/>
    </location>
</feature>
<feature type="region of interest" description="Leptin-binding" evidence="3">
    <location>
        <begin position="465"/>
        <end position="482"/>
    </location>
</feature>
<feature type="region of interest" description="Required for JAK2 activation" evidence="2">
    <location>
        <begin position="891"/>
        <end position="896"/>
    </location>
</feature>
<feature type="region of interest" description="Required for STAT3 phosphorylation" evidence="2">
    <location>
        <begin position="896"/>
        <end position="904"/>
    </location>
</feature>
<feature type="short sequence motif" description="WSXWS motif">
    <location>
        <begin position="620"/>
        <end position="624"/>
    </location>
</feature>
<feature type="short sequence motif" description="Box 1 motif">
    <location>
        <begin position="869"/>
        <end position="877"/>
    </location>
</feature>
<feature type="modified residue" description="Phosphoserine" evidence="3">
    <location>
        <position position="880"/>
    </location>
</feature>
<feature type="modified residue" description="Phosphotyrosine; by JAK2" evidence="2">
    <location>
        <position position="984"/>
    </location>
</feature>
<feature type="modified residue" description="Phosphotyrosine" evidence="2">
    <location>
        <position position="1077"/>
    </location>
</feature>
<feature type="modified residue" description="Phosphotyrosine; by JAK2" evidence="2">
    <location>
        <position position="1139"/>
    </location>
</feature>
<feature type="glycosylation site" description="N-linked (GlcNAc...) asparagine" evidence="4">
    <location>
        <position position="23"/>
    </location>
</feature>
<feature type="glycosylation site" description="N-linked (GlcNAc...) asparagine" evidence="4">
    <location>
        <position position="41"/>
    </location>
</feature>
<feature type="glycosylation site" description="N-linked (GlcNAc...) asparagine" evidence="4">
    <location>
        <position position="56"/>
    </location>
</feature>
<feature type="glycosylation site" description="N-linked (GlcNAc...) asparagine" evidence="4">
    <location>
        <position position="71"/>
    </location>
</feature>
<feature type="glycosylation site" description="N-linked (GlcNAc...) asparagine" evidence="4">
    <location>
        <position position="79"/>
    </location>
</feature>
<feature type="glycosylation site" description="N-linked (GlcNAc...) asparagine" evidence="4">
    <location>
        <position position="96"/>
    </location>
</feature>
<feature type="glycosylation site" description="N-linked (GlcNAc...) asparagine" evidence="4">
    <location>
        <position position="114"/>
    </location>
</feature>
<feature type="glycosylation site" description="N-linked (GlcNAc...) asparagine" evidence="4">
    <location>
        <position position="185"/>
    </location>
</feature>
<feature type="glycosylation site" description="N-linked (GlcNAc...) asparagine" evidence="4">
    <location>
        <position position="204"/>
    </location>
</feature>
<feature type="glycosylation site" description="N-linked (GlcNAc...) asparagine" evidence="4">
    <location>
        <position position="274"/>
    </location>
</feature>
<feature type="glycosylation site" description="N-linked (GlcNAc...) asparagine" evidence="4">
    <location>
        <position position="345"/>
    </location>
</feature>
<feature type="glycosylation site" description="N-linked (GlcNAc...) asparagine" evidence="4">
    <location>
        <position position="395"/>
    </location>
</feature>
<feature type="glycosylation site" description="N-linked (GlcNAc...) asparagine" evidence="4">
    <location>
        <position position="431"/>
    </location>
</feature>
<feature type="glycosylation site" description="N-linked (GlcNAc...) asparagine" evidence="4">
    <location>
        <position position="622"/>
    </location>
</feature>
<feature type="glycosylation site" description="N-linked (GlcNAc...) asparagine" evidence="4">
    <location>
        <position position="657"/>
    </location>
</feature>
<feature type="glycosylation site" description="N-linked (GlcNAc...) asparagine" evidence="4">
    <location>
        <position position="668"/>
    </location>
</feature>
<feature type="glycosylation site" description="N-linked (GlcNAc...) asparagine" evidence="4">
    <location>
        <position position="686"/>
    </location>
</feature>
<feature type="glycosylation site" description="N-linked (GlcNAc...) asparagine" evidence="4">
    <location>
        <position position="695"/>
    </location>
</feature>
<feature type="glycosylation site" description="N-linked (GlcNAc...) asparagine" evidence="4">
    <location>
        <position position="726"/>
    </location>
</feature>
<feature type="glycosylation site" description="N-linked (GlcNAc...) asparagine" evidence="4">
    <location>
        <position position="748"/>
    </location>
</feature>
<feature type="disulfide bond" evidence="3">
    <location>
        <begin position="37"/>
        <end position="88"/>
    </location>
</feature>
<feature type="disulfide bond" evidence="3">
    <location>
        <begin position="87"/>
        <end position="97"/>
    </location>
</feature>
<feature type="disulfide bond" evidence="3">
    <location>
        <begin position="129"/>
        <end position="140"/>
    </location>
</feature>
<feature type="disulfide bond" evidence="3">
    <location>
        <begin position="184"/>
        <end position="194"/>
    </location>
</feature>
<feature type="disulfide bond" evidence="3">
    <location>
        <begin position="350"/>
        <end position="410"/>
    </location>
</feature>
<feature type="disulfide bond" evidence="3">
    <location>
        <begin position="411"/>
        <end position="416"/>
    </location>
</feature>
<feature type="disulfide bond" evidence="3">
    <location>
        <begin position="434"/>
        <end position="445"/>
    </location>
</feature>
<feature type="disulfide bond" evidence="3">
    <location>
        <begin position="471"/>
        <end position="526"/>
    </location>
</feature>
<feature type="disulfide bond" evidence="3">
    <location>
        <begin position="486"/>
        <end position="496"/>
    </location>
</feature>
<feature type="splice variant" id="VSP_001695" description="In isoform A." evidence="6 7">
    <original>PETFE</original>
    <variation>RTDIL</variation>
    <location>
        <begin position="890"/>
        <end position="894"/>
    </location>
</feature>
<feature type="splice variant" id="VSP_001696" description="In isoform A." evidence="6 7">
    <location>
        <begin position="895"/>
        <end position="1163"/>
    </location>
</feature>
<feature type="sequence conflict" description="In Ref. 2; AAF35387/AAF34683." evidence="8" ref="2">
    <original>K</original>
    <variation>KIRGFVMLPRLVLNSQAQVIHPPRPPKVLELQ</variation>
    <location>
        <position position="889"/>
    </location>
</feature>
<comment type="function">
    <text evidence="2 3">Receptor for hormone LEP/leptin (By similarity). On ligand binding, mediates LEP central and peripheral effects through the activation of different signaling pathways such as JAK2/STAT3 and MAPK cascade/FOS. In the hypothalamus, LEP acts as an appetite-regulating factor that induces a decrease in food intake and an increase in energy consumption by inducing anorexinogenic factors and suppressing orexigenic neuropeptides, also regulates bone mass and secretion of hypothalamo-pituitary-adrenal hormones. In the periphery, increases basal metabolism, influences reproductive function, regulates pancreatic beta-cell function and insulin secretion, is pro-angiogenic and affects innate and adaptive immunity (By similarity). Control of energy homeostasis and melanocortin production (stimulation of POMC and full repression of AgRP transcription) is mediated by STAT3 signaling, whereas distinct signals regulate NPY and the control of fertility, growth and glucose homeostasis. Involved in the regulation of counter-regulatory response to hypoglycemia by inhibiting neurons of the parabrachial nucleus. Has a specific effect on T lymphocyte responses, differentially regulating the proliferation of naive and memory T-cells. Leptin increases Th1 and suppresses Th2 cytokine production (By similarity).</text>
</comment>
<comment type="function">
    <molecule>Isoform A</molecule>
    <text evidence="2">May transport LEP across the blood-brain barrier. Binds LEP and mediates LEP endocytosis. Does not induce phosphorylation of and activate STAT3.</text>
</comment>
<comment type="subunit">
    <text evidence="2 3">Present as a mixture of monomers and dimers. The phosphorylated receptor binds a number of SH2 domain-containing proteins such as JAK2, STAT3, PTPN11, and SOCS3 (By similarity). Interaction with SOCS3 inhibits JAK/STAT signaling and MAPK cascade (By similarity).</text>
</comment>
<comment type="subcellular location">
    <subcellularLocation>
        <location evidence="3">Cell membrane</location>
        <topology evidence="3">Single-pass type I membrane protein</topology>
    </subcellularLocation>
    <subcellularLocation>
        <location evidence="3">Basolateral cell membrane</location>
    </subcellularLocation>
</comment>
<comment type="alternative products">
    <event type="alternative splicing"/>
    <isoform>
        <id>Q9MYL0-1</id>
        <name>B</name>
        <sequence type="displayed"/>
    </isoform>
    <isoform>
        <id>Q9MYL0-2</id>
        <name>A</name>
        <sequence type="described" ref="VSP_001695 VSP_001696"/>
    </isoform>
</comment>
<comment type="tissue specificity">
    <text>Widely expressed. High expression of isoform B in liver, adipose tissue, hypothalamus and choroid plexus.</text>
</comment>
<comment type="domain">
    <text>The cytoplasmic domain may be essential for intracellular signal transduction by activation of JAK tyrosine kinase and STATs.</text>
</comment>
<comment type="domain">
    <text>The WSXWS motif appears to be necessary for proper protein folding and thereby efficient intracellular transport and cell-surface receptor binding.</text>
</comment>
<comment type="domain">
    <text>The box 1 motif is required for JAK interaction and/or activation.</text>
</comment>
<comment type="PTM">
    <text evidence="1">On ligand binding, phosphorylated on two conserved C-terminal tyrosine residues (isoform B only) by JAK2. Tyr-984 is required for complete binding and activation of PTPN11, ERK/FOS activation and, for interaction with SOCS3. Phosphorylation on Tyr-1139 is required for STAT3 binding/activation (By similarity).</text>
</comment>
<comment type="PTM">
    <text evidence="2">On ligand binding, phosphorylated on two conserved C-terminal tyrosine residues (isoform B only) by JAK2. Tyr-984 is required for complete binding and activation of PTPN11, ERK/FOS activation,for interaction with SOCS3 and SOCS3 mediated inhibition of leptin signaling. Phosphorylation on Tyr-1139 is required for STAT3 binding/activation. Phosphorylation of Tyr-1077 has a more accessory role.</text>
</comment>
<comment type="similarity">
    <text evidence="8">Belongs to the type I cytokine receptor family. Type 2 subfamily.</text>
</comment>
<protein>
    <recommendedName>
        <fullName>Leptin receptor</fullName>
        <shortName>LEP-R</shortName>
    </recommendedName>
    <alternativeName>
        <fullName>OB receptor</fullName>
        <shortName>OB-R</shortName>
    </alternativeName>
    <cdAntigenName>CD295</cdAntigenName>
</protein>
<sequence>MICQKFCVVLLHWEFICVITAFNLSYPITPWRFKLSCMPPNSTYDYFLLPAGLSKNTSNLNGHYETAVEFNSSDTHFSNLSKTTFHCCFRSEQDRNCSLCADNIEGKTFVSTVNSSVFQQMGANWNIQCWLKGDLKLFICYVESLFKNPFKNYKHKVHLLYVLPEVLEDSPLVPQKGSFQMVHCNCSVHERCECLVPVPTAKLNDTLLMCLKITSGGVIFQSPLMSVQPINMVKPDPPLGLRMEITDDGNLKISWSSPPLVPFPLQYEVKYSENSTTVIREADKIVSATSLLVDGILPGSSYEVQVRGKRLDGPGIWSDWSTPHVFTTQDVIYFPPKILTSVGSNVSFHCIYKNENKIVSSKKIVWWMNLAEKIPQSQYDVVSDHVSKVTFFNLNETKPRGKFTYDAVYCCNEHECHHRYAELYVIDVNINISCETDGHLTKMTCRWSTNTIQSLAGSTLQLRYRRSSLYCFDIPSIHPISKPKDCYLQSDGFYECVFQPIFLLSGYTMWIRINHPLGSLDSPPTCVLPDSVVKPLPPSSVKAEIIKNIGLLKISWEKPVFPENNLQFQIRYGLSGKEIQWKMYDVYDAKSKSVSLPVPDFCAVYAVQVRCKRSDGLGLWSNWSNPAYTVVMDIKVPMRGPEFWRIINGDTMKKEKNVTLLWKPLMKNESLCSVQRYVINHHTSCNGTWSEDVGNHTKFTFLWTEQAHTVTVLAINSIGASVANFNLTFSWPMSKVNIVQSLSAYPLNSSCVILSWILSPSDYKLMYFIIEWKNLNEDGEIKWLRISSSVKKYYIHDHFIPIEKYQFSLYPIFMEGVGKPKIINSFAQDNTEKHQNDAGLYVIVPVIISSSILLLGTLLILHQRMKKLFWEDVPNPKNCSWAQGLNFQKPETFEHLFIKHTASVTCGPLLLEPETISEDISVDTSWKNKDEMVPTTVVSLLSTTDLEKGSVCISDQFNSVNFSEAEGTEVTCEDESQRQPFVKYATLISNSKPSETDEEQGLINSSVTKCFSSKNSPLKDSFSNSSWEIEAQAFFILSDQRPNIILPHLTFSEGLDELLRLEGNFPEENNDEKSIYYLGVTSIKKRESGVLLTDKSRVLCPFPAPCLFTDIRVLQDSCSHFVENNFNLGTSSKKTFASYMPQFQTCSTQTHKIMENKMCDLTV</sequence>
<proteinExistence type="evidence at transcript level"/>
<accession>Q9MYL0</accession>
<accession>Q9MYK9</accession>
<accession>Q9MYL1</accession>
<accession>Q9MYL2</accession>
<gene>
    <name type="primary">LEPR</name>
    <name type="synonym">OBR</name>
</gene>
<keyword id="KW-0025">Alternative splicing</keyword>
<keyword id="KW-1003">Cell membrane</keyword>
<keyword id="KW-1015">Disulfide bond</keyword>
<keyword id="KW-0325">Glycoprotein</keyword>
<keyword id="KW-0472">Membrane</keyword>
<keyword id="KW-0550">Obesity</keyword>
<keyword id="KW-0597">Phosphoprotein</keyword>
<keyword id="KW-0675">Receptor</keyword>
<keyword id="KW-1185">Reference proteome</keyword>
<keyword id="KW-0677">Repeat</keyword>
<keyword id="KW-0732">Signal</keyword>
<keyword id="KW-0812">Transmembrane</keyword>
<keyword id="KW-1133">Transmembrane helix</keyword>
<dbReference type="EMBL" id="AF225874">
    <property type="protein sequence ID" value="AAF35388.1"/>
    <property type="molecule type" value="mRNA"/>
</dbReference>
<dbReference type="EMBL" id="AF225875">
    <property type="protein sequence ID" value="AAF35389.1"/>
    <property type="molecule type" value="mRNA"/>
</dbReference>
<dbReference type="EMBL" id="AF225873">
    <property type="protein sequence ID" value="AAF35387.1"/>
    <property type="molecule type" value="mRNA"/>
</dbReference>
<dbReference type="EMBL" id="AF222960">
    <property type="protein sequence ID" value="AAF34683.1"/>
    <property type="molecule type" value="mRNA"/>
</dbReference>
<dbReference type="RefSeq" id="NP_001027991.1">
    <property type="nucleotide sequence ID" value="NM_001032819.1"/>
</dbReference>
<dbReference type="SMR" id="Q9MYL0"/>
<dbReference type="FunCoup" id="Q9MYL0">
    <property type="interactions" value="1037"/>
</dbReference>
<dbReference type="STRING" id="9544.ENSMMUP00000004351"/>
<dbReference type="GlyCosmos" id="Q9MYL0">
    <property type="glycosylation" value="20 sites, No reported glycans"/>
</dbReference>
<dbReference type="PaxDb" id="9544-ENSMMUP00000040008"/>
<dbReference type="GeneID" id="574126"/>
<dbReference type="KEGG" id="mcc:574126"/>
<dbReference type="CTD" id="3953"/>
<dbReference type="eggNOG" id="ENOG502RK5B">
    <property type="taxonomic scope" value="Eukaryota"/>
</dbReference>
<dbReference type="InParanoid" id="Q9MYL0"/>
<dbReference type="OrthoDB" id="8964127at2759"/>
<dbReference type="Proteomes" id="UP000006718">
    <property type="component" value="Unassembled WGS sequence"/>
</dbReference>
<dbReference type="GO" id="GO:0016323">
    <property type="term" value="C:basolateral plasma membrane"/>
    <property type="evidence" value="ECO:0007669"/>
    <property type="project" value="UniProtKB-SubCell"/>
</dbReference>
<dbReference type="GO" id="GO:0009897">
    <property type="term" value="C:external side of plasma membrane"/>
    <property type="evidence" value="ECO:0000318"/>
    <property type="project" value="GO_Central"/>
</dbReference>
<dbReference type="GO" id="GO:0043235">
    <property type="term" value="C:receptor complex"/>
    <property type="evidence" value="ECO:0000318"/>
    <property type="project" value="GO_Central"/>
</dbReference>
<dbReference type="GO" id="GO:0019955">
    <property type="term" value="F:cytokine binding"/>
    <property type="evidence" value="ECO:0000318"/>
    <property type="project" value="GO_Central"/>
</dbReference>
<dbReference type="GO" id="GO:0004896">
    <property type="term" value="F:cytokine receptor activity"/>
    <property type="evidence" value="ECO:0000318"/>
    <property type="project" value="GO_Central"/>
</dbReference>
<dbReference type="GO" id="GO:0038021">
    <property type="term" value="F:leptin receptor activity"/>
    <property type="evidence" value="ECO:0000250"/>
    <property type="project" value="UniProtKB"/>
</dbReference>
<dbReference type="GO" id="GO:0001525">
    <property type="term" value="P:angiogenesis"/>
    <property type="evidence" value="ECO:0000250"/>
    <property type="project" value="UniProtKB"/>
</dbReference>
<dbReference type="GO" id="GO:0098868">
    <property type="term" value="P:bone growth"/>
    <property type="evidence" value="ECO:0000250"/>
    <property type="project" value="UniProtKB"/>
</dbReference>
<dbReference type="GO" id="GO:0019221">
    <property type="term" value="P:cytokine-mediated signaling pathway"/>
    <property type="evidence" value="ECO:0000318"/>
    <property type="project" value="GO_Central"/>
</dbReference>
<dbReference type="GO" id="GO:0097009">
    <property type="term" value="P:energy homeostasis"/>
    <property type="evidence" value="ECO:0000250"/>
    <property type="project" value="UniProtKB"/>
</dbReference>
<dbReference type="GO" id="GO:0042593">
    <property type="term" value="P:glucose homeostasis"/>
    <property type="evidence" value="ECO:0000250"/>
    <property type="project" value="UniProtKB"/>
</dbReference>
<dbReference type="GO" id="GO:0033210">
    <property type="term" value="P:leptin-mediated signaling pathway"/>
    <property type="evidence" value="ECO:0000250"/>
    <property type="project" value="UniProtKB"/>
</dbReference>
<dbReference type="GO" id="GO:0010507">
    <property type="term" value="P:negative regulation of autophagy"/>
    <property type="evidence" value="ECO:0000250"/>
    <property type="project" value="UniProtKB"/>
</dbReference>
<dbReference type="GO" id="GO:0006909">
    <property type="term" value="P:phagocytosis"/>
    <property type="evidence" value="ECO:0000250"/>
    <property type="project" value="UniProtKB"/>
</dbReference>
<dbReference type="GO" id="GO:0008284">
    <property type="term" value="P:positive regulation of cell population proliferation"/>
    <property type="evidence" value="ECO:0000318"/>
    <property type="project" value="GO_Central"/>
</dbReference>
<dbReference type="GO" id="GO:0046850">
    <property type="term" value="P:regulation of bone remodeling"/>
    <property type="evidence" value="ECO:0000250"/>
    <property type="project" value="UniProtKB"/>
</dbReference>
<dbReference type="GO" id="GO:0060259">
    <property type="term" value="P:regulation of feeding behavior"/>
    <property type="evidence" value="ECO:0000250"/>
    <property type="project" value="UniProtKB"/>
</dbReference>
<dbReference type="GO" id="GO:0044321">
    <property type="term" value="P:response to leptin"/>
    <property type="evidence" value="ECO:0000250"/>
    <property type="project" value="UniProtKB"/>
</dbReference>
<dbReference type="GO" id="GO:0019953">
    <property type="term" value="P:sexual reproduction"/>
    <property type="evidence" value="ECO:0000250"/>
    <property type="project" value="UniProtKB"/>
</dbReference>
<dbReference type="GO" id="GO:0030217">
    <property type="term" value="P:T cell differentiation"/>
    <property type="evidence" value="ECO:0000250"/>
    <property type="project" value="UniProtKB"/>
</dbReference>
<dbReference type="CDD" id="cd00063">
    <property type="entry name" value="FN3"/>
    <property type="match status" value="3"/>
</dbReference>
<dbReference type="FunFam" id="2.60.40.10:FF:000494">
    <property type="entry name" value="Leptin receptor"/>
    <property type="match status" value="1"/>
</dbReference>
<dbReference type="FunFam" id="2.60.40.10:FF:000501">
    <property type="entry name" value="Leptin receptor"/>
    <property type="match status" value="1"/>
</dbReference>
<dbReference type="FunFam" id="2.60.40.10:FF:000515">
    <property type="entry name" value="Leptin receptor"/>
    <property type="match status" value="1"/>
</dbReference>
<dbReference type="FunFam" id="2.60.40.10:FF:000558">
    <property type="entry name" value="Leptin receptor"/>
    <property type="match status" value="1"/>
</dbReference>
<dbReference type="FunFam" id="2.60.40.10:FF:000568">
    <property type="entry name" value="Leptin receptor"/>
    <property type="match status" value="1"/>
</dbReference>
<dbReference type="FunFam" id="2.60.40.10:FF:000613">
    <property type="entry name" value="Leptin receptor"/>
    <property type="match status" value="1"/>
</dbReference>
<dbReference type="FunFam" id="2.60.40.10:FF:000688">
    <property type="entry name" value="Leptin receptor"/>
    <property type="match status" value="1"/>
</dbReference>
<dbReference type="Gene3D" id="2.60.40.10">
    <property type="entry name" value="Immunoglobulins"/>
    <property type="match status" value="7"/>
</dbReference>
<dbReference type="InterPro" id="IPR003961">
    <property type="entry name" value="FN3_dom"/>
</dbReference>
<dbReference type="InterPro" id="IPR036116">
    <property type="entry name" value="FN3_sf"/>
</dbReference>
<dbReference type="InterPro" id="IPR003529">
    <property type="entry name" value="Hematopoietin_rcpt_Gp130_CS"/>
</dbReference>
<dbReference type="InterPro" id="IPR003531">
    <property type="entry name" value="Hempt_rcpt_S_F1_CS"/>
</dbReference>
<dbReference type="InterPro" id="IPR013783">
    <property type="entry name" value="Ig-like_fold"/>
</dbReference>
<dbReference type="InterPro" id="IPR010457">
    <property type="entry name" value="IgC2-like_lig-bd"/>
</dbReference>
<dbReference type="InterPro" id="IPR041182">
    <property type="entry name" value="LEP-R_IGD"/>
</dbReference>
<dbReference type="PANTHER" id="PTHR23037">
    <property type="entry name" value="CYTOKINE RECEPTOR"/>
    <property type="match status" value="1"/>
</dbReference>
<dbReference type="PANTHER" id="PTHR23037:SF44">
    <property type="entry name" value="LEPTIN RECEPTOR"/>
    <property type="match status" value="1"/>
</dbReference>
<dbReference type="Pfam" id="PF00041">
    <property type="entry name" value="fn3"/>
    <property type="match status" value="1"/>
</dbReference>
<dbReference type="Pfam" id="PF06328">
    <property type="entry name" value="Lep_receptor_Ig"/>
    <property type="match status" value="1"/>
</dbReference>
<dbReference type="Pfam" id="PF18589">
    <property type="entry name" value="ObR_Ig"/>
    <property type="match status" value="2"/>
</dbReference>
<dbReference type="SMART" id="SM00060">
    <property type="entry name" value="FN3"/>
    <property type="match status" value="4"/>
</dbReference>
<dbReference type="SUPFAM" id="SSF49265">
    <property type="entry name" value="Fibronectin type III"/>
    <property type="match status" value="4"/>
</dbReference>
<dbReference type="PROSITE" id="PS50853">
    <property type="entry name" value="FN3"/>
    <property type="match status" value="3"/>
</dbReference>
<dbReference type="PROSITE" id="PS01353">
    <property type="entry name" value="HEMATOPO_REC_L_F2"/>
    <property type="match status" value="1"/>
</dbReference>